<protein>
    <recommendedName>
        <fullName evidence="1">Replication protein E1</fullName>
        <ecNumber evidence="1 4">5.6.2.4</ecNumber>
    </recommendedName>
    <alternativeName>
        <fullName evidence="1">ATP-dependent helicase E1</fullName>
    </alternativeName>
    <alternativeName>
        <fullName evidence="1">DNA 3'-5' helicase E1</fullName>
    </alternativeName>
</protein>
<gene>
    <name evidence="1" type="primary">E1</name>
</gene>
<dbReference type="EC" id="5.6.2.4" evidence="1 4"/>
<dbReference type="EMBL" id="X00203">
    <property type="protein sequence ID" value="CAA25020.1"/>
    <property type="molecule type" value="Genomic_DNA"/>
</dbReference>
<dbReference type="PIR" id="A03658">
    <property type="entry name" value="W1WL6"/>
</dbReference>
<dbReference type="RefSeq" id="NP_040298.1">
    <property type="nucleotide sequence ID" value="NC_001355.1"/>
</dbReference>
<dbReference type="SMR" id="P03113"/>
<dbReference type="GeneID" id="1489363"/>
<dbReference type="KEGG" id="vg:1489363"/>
<dbReference type="OrthoDB" id="4795at10239"/>
<dbReference type="Proteomes" id="UP000007676">
    <property type="component" value="Genome"/>
</dbReference>
<dbReference type="GO" id="GO:0042025">
    <property type="term" value="C:host cell nucleus"/>
    <property type="evidence" value="ECO:0007669"/>
    <property type="project" value="UniProtKB-SubCell"/>
</dbReference>
<dbReference type="GO" id="GO:0005524">
    <property type="term" value="F:ATP binding"/>
    <property type="evidence" value="ECO:0007669"/>
    <property type="project" value="UniProtKB-UniRule"/>
</dbReference>
<dbReference type="GO" id="GO:0016887">
    <property type="term" value="F:ATP hydrolysis activity"/>
    <property type="evidence" value="ECO:0007669"/>
    <property type="project" value="RHEA"/>
</dbReference>
<dbReference type="GO" id="GO:0003677">
    <property type="term" value="F:DNA binding"/>
    <property type="evidence" value="ECO:0007669"/>
    <property type="project" value="UniProtKB-UniRule"/>
</dbReference>
<dbReference type="GO" id="GO:0003678">
    <property type="term" value="F:DNA helicase activity"/>
    <property type="evidence" value="ECO:0007669"/>
    <property type="project" value="UniProtKB-UniRule"/>
</dbReference>
<dbReference type="GO" id="GO:0006260">
    <property type="term" value="P:DNA replication"/>
    <property type="evidence" value="ECO:0007669"/>
    <property type="project" value="UniProtKB-UniRule"/>
</dbReference>
<dbReference type="FunFam" id="1.10.10.510:FF:000001">
    <property type="entry name" value="Replication protein E1"/>
    <property type="match status" value="1"/>
</dbReference>
<dbReference type="FunFam" id="3.40.50.300:FF:004036">
    <property type="entry name" value="Replication protein E1"/>
    <property type="match status" value="1"/>
</dbReference>
<dbReference type="Gene3D" id="3.40.1310.10">
    <property type="match status" value="1"/>
</dbReference>
<dbReference type="Gene3D" id="3.40.50.300">
    <property type="entry name" value="P-loop containing nucleotide triphosphate hydrolases"/>
    <property type="match status" value="1"/>
</dbReference>
<dbReference type="Gene3D" id="1.10.10.510">
    <property type="entry name" value="Zinc finger, large T-antigen D1 domain"/>
    <property type="match status" value="1"/>
</dbReference>
<dbReference type="HAMAP" id="MF_04000">
    <property type="entry name" value="PPV_E1"/>
    <property type="match status" value="1"/>
</dbReference>
<dbReference type="InterPro" id="IPR014015">
    <property type="entry name" value="Helicase_SF3_DNA-vir"/>
</dbReference>
<dbReference type="InterPro" id="IPR027417">
    <property type="entry name" value="P-loop_NTPase"/>
</dbReference>
<dbReference type="InterPro" id="IPR001177">
    <property type="entry name" value="PPV_DNA_helicase_E1_C"/>
</dbReference>
<dbReference type="InterPro" id="IPR014000">
    <property type="entry name" value="PPV_DNA_helicase_E1_N"/>
</dbReference>
<dbReference type="InterPro" id="IPR046832">
    <property type="entry name" value="PPV_E1_DBD"/>
</dbReference>
<dbReference type="InterPro" id="IPR046935">
    <property type="entry name" value="PPV_E1_DBD_sf"/>
</dbReference>
<dbReference type="InterPro" id="IPR016393">
    <property type="entry name" value="Rep_E1_papillomaV"/>
</dbReference>
<dbReference type="InterPro" id="IPR037102">
    <property type="entry name" value="Znf_lg_T-Ag_D1_dom_sf"/>
</dbReference>
<dbReference type="Pfam" id="PF00519">
    <property type="entry name" value="PPV_E1_C"/>
    <property type="match status" value="1"/>
</dbReference>
<dbReference type="Pfam" id="PF20450">
    <property type="entry name" value="PPV_E1_DBD"/>
    <property type="match status" value="1"/>
</dbReference>
<dbReference type="Pfam" id="PF00524">
    <property type="entry name" value="PPV_E1_N"/>
    <property type="match status" value="1"/>
</dbReference>
<dbReference type="PIRSF" id="PIRSF003383">
    <property type="entry name" value="Rep_E1_papillomaV"/>
    <property type="match status" value="1"/>
</dbReference>
<dbReference type="SUPFAM" id="SSF55464">
    <property type="entry name" value="Origin of replication-binding domain, RBD-like"/>
    <property type="match status" value="1"/>
</dbReference>
<dbReference type="SUPFAM" id="SSF52540">
    <property type="entry name" value="P-loop containing nucleoside triphosphate hydrolases"/>
    <property type="match status" value="1"/>
</dbReference>
<dbReference type="PROSITE" id="PS51206">
    <property type="entry name" value="SF3_HELICASE_1"/>
    <property type="match status" value="1"/>
</dbReference>
<organismHost>
    <name type="scientific">Homo sapiens</name>
    <name type="common">Human</name>
    <dbReference type="NCBI Taxonomy" id="9606"/>
</organismHost>
<reference key="1">
    <citation type="journal article" date="1983" name="EMBO J.">
        <title>DNA sequence and genome organization of genital human papillomavirus type 6b.</title>
        <authorList>
            <person name="Schwarz E."/>
            <person name="Durst M."/>
            <person name="Demankowski C."/>
            <person name="Lattermann O."/>
            <person name="Zech R."/>
            <person name="Wolfsperger E."/>
            <person name="Suhai S."/>
            <person name="zur Hausen H."/>
        </authorList>
    </citation>
    <scope>NUCLEOTIDE SEQUENCE [GENOMIC DNA]</scope>
</reference>
<reference key="2">
    <citation type="journal article" date="1993" name="Nucleic Acids Res.">
        <title>E1 protein of human papillomavirus is a DNA helicase/ATPase.</title>
        <authorList>
            <person name="Hughes F.J."/>
            <person name="Romanos M.A."/>
        </authorList>
    </citation>
    <scope>FUNCTION AS A HELICASE</scope>
    <scope>FUNCTION AS AN ATPASE</scope>
    <scope>CATALYTIC ACTIVITY</scope>
</reference>
<organism>
    <name type="scientific">Human papillomavirus type 6b</name>
    <dbReference type="NCBI Taxonomy" id="10600"/>
    <lineage>
        <taxon>Viruses</taxon>
        <taxon>Monodnaviria</taxon>
        <taxon>Shotokuvirae</taxon>
        <taxon>Cossaviricota</taxon>
        <taxon>Papovaviricetes</taxon>
        <taxon>Zurhausenvirales</taxon>
        <taxon>Papillomaviridae</taxon>
        <taxon>Firstpapillomavirinae</taxon>
        <taxon>Alphapapillomavirus</taxon>
        <taxon>Alphapapillomavirus 10</taxon>
    </lineage>
</organism>
<keyword id="KW-0067">ATP-binding</keyword>
<keyword id="KW-0235">DNA replication</keyword>
<keyword id="KW-0238">DNA-binding</keyword>
<keyword id="KW-0244">Early protein</keyword>
<keyword id="KW-0347">Helicase</keyword>
<keyword id="KW-1048">Host nucleus</keyword>
<keyword id="KW-0378">Hydrolase</keyword>
<keyword id="KW-0413">Isomerase</keyword>
<keyword id="KW-1017">Isopeptide bond</keyword>
<keyword id="KW-0547">Nucleotide-binding</keyword>
<keyword id="KW-0597">Phosphoprotein</keyword>
<keyword id="KW-0832">Ubl conjugation</keyword>
<feature type="chain" id="PRO_0000133104" description="Replication protein E1">
    <location>
        <begin position="1"/>
        <end position="649"/>
    </location>
</feature>
<feature type="domain" description="SF3 helicase" evidence="1">
    <location>
        <begin position="452"/>
        <end position="602"/>
    </location>
</feature>
<feature type="region of interest" description="Disordered" evidence="2">
    <location>
        <begin position="138"/>
        <end position="169"/>
    </location>
</feature>
<feature type="region of interest" description="DNA-binding region" evidence="1">
    <location>
        <begin position="187"/>
        <end position="353"/>
    </location>
</feature>
<feature type="short sequence motif" description="Nuclear localization signal" evidence="1">
    <location>
        <begin position="83"/>
        <end position="85"/>
    </location>
</feature>
<feature type="short sequence motif" description="Nuclear export signal" evidence="1">
    <location>
        <begin position="106"/>
        <end position="115"/>
    </location>
</feature>
<feature type="binding site" evidence="1">
    <location>
        <begin position="478"/>
        <end position="485"/>
    </location>
    <ligand>
        <name>ATP</name>
        <dbReference type="ChEBI" id="CHEBI:30616"/>
    </ligand>
</feature>
<feature type="modified residue" description="Phosphoserine; by host" evidence="1">
    <location>
        <position position="89"/>
    </location>
</feature>
<feature type="modified residue" description="Phosphoserine; by host" evidence="1">
    <location>
        <position position="93"/>
    </location>
</feature>
<feature type="modified residue" description="Phosphoserine; by host" evidence="1">
    <location>
        <position position="107"/>
    </location>
</feature>
<feature type="cross-link" description="Glycyl lysine isopeptide (Lys-Gly) (interchain with G-Cter in SUMO)" evidence="1">
    <location>
        <position position="559"/>
    </location>
</feature>
<comment type="function">
    <text evidence="1 4">ATP-dependent DNA 3'-5' helicase required for initiation of viral DNA replication. It forms a complex with the viral E2 protein. The E1-E2 complex binds to the replication origin which contains binding sites for both proteins. During the initial step, a dimer of E1 interacts with a dimer of protein E2 leading to a complex that binds the viral origin of replication with high specificity. Then, a second dimer of E1 displaces the E2 dimer in an ATP-dependent manner to form the E1 tetramer. Following this, two E1 monomers are added to each half of the site, which results in the formation of two E1 trimers on the viral ori. Subsequently, two hexamers will be created. The double hexamer acts as a bi-directional helicase machinery and unwinds the viral DNA and then recruits the host DNA polymerase to start replication.</text>
</comment>
<comment type="catalytic activity">
    <reaction evidence="1 4">
        <text>Couples ATP hydrolysis with the unwinding of duplex DNA by translocating in the 3'-5' direction.</text>
        <dbReference type="EC" id="5.6.2.4"/>
    </reaction>
</comment>
<comment type="catalytic activity">
    <reaction evidence="1 3">
        <text>ATP + H2O = ADP + phosphate + H(+)</text>
        <dbReference type="Rhea" id="RHEA:13065"/>
        <dbReference type="ChEBI" id="CHEBI:15377"/>
        <dbReference type="ChEBI" id="CHEBI:15378"/>
        <dbReference type="ChEBI" id="CHEBI:30616"/>
        <dbReference type="ChEBI" id="CHEBI:43474"/>
        <dbReference type="ChEBI" id="CHEBI:456216"/>
        <dbReference type="EC" id="5.6.2.4"/>
    </reaction>
</comment>
<comment type="subunit">
    <text evidence="1">Can form hexamers. Interacts with E2 protein; this interaction increases E1 DNA binding specificity. Interacts with host DNA polymerase subunit POLA2. Interacts with host single stranded DNA-binding protein RPA1. Interacts with host TOP1; this interaction stimulates the enzymatic activity of TOP1.</text>
</comment>
<comment type="subcellular location">
    <subcellularLocation>
        <location evidence="1">Host nucleus</location>
    </subcellularLocation>
</comment>
<comment type="PTM">
    <text evidence="1">Phosphorylated.</text>
</comment>
<comment type="PTM">
    <text evidence="1">Sumoylated.</text>
</comment>
<comment type="similarity">
    <text evidence="1">Belongs to the papillomaviridae E1 protein family.</text>
</comment>
<sequence length="649" mass="73266">MADDSGTENEGSGCTGWFMVEAIVQHPTGTQISDDEDEEVEDSGYDMVDFIDDSNITHNSLEAQALFNRQEADTHYATVQDLKRKYLGSPYVSPINTIAEAVESEISPRLDAIKLTRQPKKVKRRLFQTRELTDSGYGYSEVEAGTGTQVEKHGVPENGGDGQEKDTGRDIEGEEHTEAEAPTNSVREHAGTAGILELLKCKDLRAALLGKFKECFGLSFIDLIRPFKSDKTTCLDWVVAGFGIHHSISEAFQKLIEPLSLYAHIQWLTNAWGMVLLVLLRFKVNKSRSTVARTLATLLNIPENQMLIEPPKIQSGVAALYWFRTGISNASTVIGEAPEWITRQTVIEHGLADSQFKLTEMVQWAYDNDICEESEIAFEYAQRGDFDSNARAFLNSNMQAKYVKDCATMCRHYKHAEMRKMSIKQWIKHRGSKIEGTGNWKPIVQFLRHQNIEFIPFLTKFKLWLHGTPKKNCIAIVGPPDTGKSYFCMSLISFLGGTVISHVNSSSHFWLQPLVDAKVALLDDATQPCWIYMDTYMRNLLDGNPMSIDRKHKALTLIKCPPLLVTSNIDITKEDKYKYLHTRVTTFTFPNPFPFDRNGNAVYELSNTNWKCFFERLSSSLDIQDSEDEEDGSNSQAFRCVPGTVVRTL</sequence>
<proteinExistence type="evidence at protein level"/>
<accession>P03113</accession>
<evidence type="ECO:0000255" key="1">
    <source>
        <dbReference type="HAMAP-Rule" id="MF_04000"/>
    </source>
</evidence>
<evidence type="ECO:0000256" key="2">
    <source>
        <dbReference type="SAM" id="MobiDB-lite"/>
    </source>
</evidence>
<evidence type="ECO:0000269" key="3">
    <source>
    </source>
</evidence>
<evidence type="ECO:0000305" key="4">
    <source>
    </source>
</evidence>
<name>VE1_HPV6B</name>